<feature type="chain" id="PRO_1000049971" description="Gamma-glutamyl phosphate reductase">
    <location>
        <begin position="1"/>
        <end position="422"/>
    </location>
</feature>
<organism>
    <name type="scientific">Nitrosomonas eutropha (strain DSM 101675 / C91 / Nm57)</name>
    <dbReference type="NCBI Taxonomy" id="335283"/>
    <lineage>
        <taxon>Bacteria</taxon>
        <taxon>Pseudomonadati</taxon>
        <taxon>Pseudomonadota</taxon>
        <taxon>Betaproteobacteria</taxon>
        <taxon>Nitrosomonadales</taxon>
        <taxon>Nitrosomonadaceae</taxon>
        <taxon>Nitrosomonas</taxon>
    </lineage>
</organism>
<evidence type="ECO:0000255" key="1">
    <source>
        <dbReference type="HAMAP-Rule" id="MF_00412"/>
    </source>
</evidence>
<protein>
    <recommendedName>
        <fullName evidence="1">Gamma-glutamyl phosphate reductase</fullName>
        <shortName evidence="1">GPR</shortName>
        <ecNumber evidence="1">1.2.1.41</ecNumber>
    </recommendedName>
    <alternativeName>
        <fullName evidence="1">Glutamate-5-semialdehyde dehydrogenase</fullName>
    </alternativeName>
    <alternativeName>
        <fullName evidence="1">Glutamyl-gamma-semialdehyde dehydrogenase</fullName>
        <shortName evidence="1">GSA dehydrogenase</shortName>
    </alternativeName>
</protein>
<accession>Q0AEA6</accession>
<sequence>MEKNEKIHADMQALGRAACAAARIVAKADTATKNHALAMMARAIRRDEALLLAANAKDVAQARNKGLESAMIDRLTLTSRGVVSMATGLEQIATLPDPIGAMTDLDYRPSGIQVGKMRVPLGVIGIIYEARPNVTADAAGLCLKAGNAAILRGGSEAIQSNQAIAICVREGLRSAGLPEQTMQVVETTDRAAVSALITMSEYVDVIVPRGGKGLIERITNEARVPVIKHLDGVCHVYVDLSADLEKAVRVADNAKTQRYGTCNTMETLLVHTGIAEQFLPRICQIFLEKEVELRGDEAACALVSRMKPAVEEDWYAEYLAPILSVRIVADIDEAITHIATYGSQHTDTIVTENYSRARQFLREVDSSSVMVNASTRFADGFEYGLGAEIGISTDKLHARGPVGLEGLTSQKFIVLGDGHIRE</sequence>
<name>PROA_NITEC</name>
<gene>
    <name evidence="1" type="primary">proA</name>
    <name type="ordered locus">Neut_2104</name>
</gene>
<comment type="function">
    <text evidence="1">Catalyzes the NADPH-dependent reduction of L-glutamate 5-phosphate into L-glutamate 5-semialdehyde and phosphate. The product spontaneously undergoes cyclization to form 1-pyrroline-5-carboxylate.</text>
</comment>
<comment type="catalytic activity">
    <reaction evidence="1">
        <text>L-glutamate 5-semialdehyde + phosphate + NADP(+) = L-glutamyl 5-phosphate + NADPH + H(+)</text>
        <dbReference type="Rhea" id="RHEA:19541"/>
        <dbReference type="ChEBI" id="CHEBI:15378"/>
        <dbReference type="ChEBI" id="CHEBI:43474"/>
        <dbReference type="ChEBI" id="CHEBI:57783"/>
        <dbReference type="ChEBI" id="CHEBI:58066"/>
        <dbReference type="ChEBI" id="CHEBI:58274"/>
        <dbReference type="ChEBI" id="CHEBI:58349"/>
        <dbReference type="EC" id="1.2.1.41"/>
    </reaction>
</comment>
<comment type="pathway">
    <text evidence="1">Amino-acid biosynthesis; L-proline biosynthesis; L-glutamate 5-semialdehyde from L-glutamate: step 2/2.</text>
</comment>
<comment type="subcellular location">
    <subcellularLocation>
        <location evidence="1">Cytoplasm</location>
    </subcellularLocation>
</comment>
<comment type="similarity">
    <text evidence="1">Belongs to the gamma-glutamyl phosphate reductase family.</text>
</comment>
<dbReference type="EC" id="1.2.1.41" evidence="1"/>
<dbReference type="EMBL" id="CP000450">
    <property type="protein sequence ID" value="ABI60326.1"/>
    <property type="molecule type" value="Genomic_DNA"/>
</dbReference>
<dbReference type="RefSeq" id="WP_011635123.1">
    <property type="nucleotide sequence ID" value="NC_008344.1"/>
</dbReference>
<dbReference type="SMR" id="Q0AEA6"/>
<dbReference type="STRING" id="335283.Neut_2104"/>
<dbReference type="KEGG" id="net:Neut_2104"/>
<dbReference type="eggNOG" id="COG0014">
    <property type="taxonomic scope" value="Bacteria"/>
</dbReference>
<dbReference type="HOGENOM" id="CLU_030231_0_0_4"/>
<dbReference type="OrthoDB" id="9809970at2"/>
<dbReference type="UniPathway" id="UPA00098">
    <property type="reaction ID" value="UER00360"/>
</dbReference>
<dbReference type="Proteomes" id="UP000001966">
    <property type="component" value="Chromosome"/>
</dbReference>
<dbReference type="GO" id="GO:0005737">
    <property type="term" value="C:cytoplasm"/>
    <property type="evidence" value="ECO:0007669"/>
    <property type="project" value="UniProtKB-SubCell"/>
</dbReference>
<dbReference type="GO" id="GO:0004350">
    <property type="term" value="F:glutamate-5-semialdehyde dehydrogenase activity"/>
    <property type="evidence" value="ECO:0007669"/>
    <property type="project" value="UniProtKB-UniRule"/>
</dbReference>
<dbReference type="GO" id="GO:0050661">
    <property type="term" value="F:NADP binding"/>
    <property type="evidence" value="ECO:0007669"/>
    <property type="project" value="InterPro"/>
</dbReference>
<dbReference type="GO" id="GO:0055129">
    <property type="term" value="P:L-proline biosynthetic process"/>
    <property type="evidence" value="ECO:0007669"/>
    <property type="project" value="UniProtKB-UniRule"/>
</dbReference>
<dbReference type="CDD" id="cd07079">
    <property type="entry name" value="ALDH_F18-19_ProA-GPR"/>
    <property type="match status" value="1"/>
</dbReference>
<dbReference type="FunFam" id="3.40.309.10:FF:000006">
    <property type="entry name" value="Gamma-glutamyl phosphate reductase"/>
    <property type="match status" value="1"/>
</dbReference>
<dbReference type="Gene3D" id="3.40.605.10">
    <property type="entry name" value="Aldehyde Dehydrogenase, Chain A, domain 1"/>
    <property type="match status" value="1"/>
</dbReference>
<dbReference type="Gene3D" id="3.40.309.10">
    <property type="entry name" value="Aldehyde Dehydrogenase, Chain A, domain 2"/>
    <property type="match status" value="1"/>
</dbReference>
<dbReference type="HAMAP" id="MF_00412">
    <property type="entry name" value="ProA"/>
    <property type="match status" value="1"/>
</dbReference>
<dbReference type="InterPro" id="IPR016161">
    <property type="entry name" value="Ald_DH/histidinol_DH"/>
</dbReference>
<dbReference type="InterPro" id="IPR016163">
    <property type="entry name" value="Ald_DH_C"/>
</dbReference>
<dbReference type="InterPro" id="IPR016162">
    <property type="entry name" value="Ald_DH_N"/>
</dbReference>
<dbReference type="InterPro" id="IPR015590">
    <property type="entry name" value="Aldehyde_DH_dom"/>
</dbReference>
<dbReference type="InterPro" id="IPR020593">
    <property type="entry name" value="G-glutamylP_reductase_CS"/>
</dbReference>
<dbReference type="InterPro" id="IPR012134">
    <property type="entry name" value="Glu-5-SA_DH"/>
</dbReference>
<dbReference type="InterPro" id="IPR000965">
    <property type="entry name" value="GPR_dom"/>
</dbReference>
<dbReference type="NCBIfam" id="NF001221">
    <property type="entry name" value="PRK00197.1"/>
    <property type="match status" value="1"/>
</dbReference>
<dbReference type="NCBIfam" id="TIGR00407">
    <property type="entry name" value="proA"/>
    <property type="match status" value="1"/>
</dbReference>
<dbReference type="PANTHER" id="PTHR11063:SF8">
    <property type="entry name" value="DELTA-1-PYRROLINE-5-CARBOXYLATE SYNTHASE"/>
    <property type="match status" value="1"/>
</dbReference>
<dbReference type="PANTHER" id="PTHR11063">
    <property type="entry name" value="GLUTAMATE SEMIALDEHYDE DEHYDROGENASE"/>
    <property type="match status" value="1"/>
</dbReference>
<dbReference type="Pfam" id="PF00171">
    <property type="entry name" value="Aldedh"/>
    <property type="match status" value="1"/>
</dbReference>
<dbReference type="PIRSF" id="PIRSF000151">
    <property type="entry name" value="GPR"/>
    <property type="match status" value="1"/>
</dbReference>
<dbReference type="SUPFAM" id="SSF53720">
    <property type="entry name" value="ALDH-like"/>
    <property type="match status" value="1"/>
</dbReference>
<dbReference type="PROSITE" id="PS01223">
    <property type="entry name" value="PROA"/>
    <property type="match status" value="1"/>
</dbReference>
<keyword id="KW-0028">Amino-acid biosynthesis</keyword>
<keyword id="KW-0963">Cytoplasm</keyword>
<keyword id="KW-0521">NADP</keyword>
<keyword id="KW-0560">Oxidoreductase</keyword>
<keyword id="KW-0641">Proline biosynthesis</keyword>
<reference key="1">
    <citation type="journal article" date="2007" name="Environ. Microbiol.">
        <title>Whole-genome analysis of the ammonia-oxidizing bacterium, Nitrosomonas eutropha C91: implications for niche adaptation.</title>
        <authorList>
            <person name="Stein L.Y."/>
            <person name="Arp D.J."/>
            <person name="Berube P.M."/>
            <person name="Chain P.S."/>
            <person name="Hauser L."/>
            <person name="Jetten M.S."/>
            <person name="Klotz M.G."/>
            <person name="Larimer F.W."/>
            <person name="Norton J.M."/>
            <person name="Op den Camp H.J.M."/>
            <person name="Shin M."/>
            <person name="Wei X."/>
        </authorList>
    </citation>
    <scope>NUCLEOTIDE SEQUENCE [LARGE SCALE GENOMIC DNA]</scope>
    <source>
        <strain>DSM 101675 / C91 / Nm57</strain>
    </source>
</reference>
<proteinExistence type="inferred from homology"/>